<dbReference type="EMBL" id="AP011115">
    <property type="protein sequence ID" value="BAH54287.1"/>
    <property type="molecule type" value="Genomic_DNA"/>
</dbReference>
<dbReference type="RefSeq" id="WP_015889774.1">
    <property type="nucleotide sequence ID" value="NC_012522.1"/>
</dbReference>
<dbReference type="SMR" id="C1AZL6"/>
<dbReference type="STRING" id="632772.ROP_60400"/>
<dbReference type="KEGG" id="rop:ROP_60400"/>
<dbReference type="PATRIC" id="fig|632772.20.peg.6308"/>
<dbReference type="HOGENOM" id="CLU_086034_2_0_11"/>
<dbReference type="OrthoDB" id="3267321at2"/>
<dbReference type="Proteomes" id="UP000002212">
    <property type="component" value="Chromosome"/>
</dbReference>
<dbReference type="GO" id="GO:0033281">
    <property type="term" value="C:TAT protein transport complex"/>
    <property type="evidence" value="ECO:0007669"/>
    <property type="project" value="UniProtKB-UniRule"/>
</dbReference>
<dbReference type="GO" id="GO:0008320">
    <property type="term" value="F:protein transmembrane transporter activity"/>
    <property type="evidence" value="ECO:0007669"/>
    <property type="project" value="UniProtKB-UniRule"/>
</dbReference>
<dbReference type="GO" id="GO:0043953">
    <property type="term" value="P:protein transport by the Tat complex"/>
    <property type="evidence" value="ECO:0007669"/>
    <property type="project" value="UniProtKB-UniRule"/>
</dbReference>
<dbReference type="Gene3D" id="1.20.5.3310">
    <property type="match status" value="1"/>
</dbReference>
<dbReference type="HAMAP" id="MF_00237">
    <property type="entry name" value="TatB"/>
    <property type="match status" value="1"/>
</dbReference>
<dbReference type="InterPro" id="IPR018448">
    <property type="entry name" value="TatB"/>
</dbReference>
<dbReference type="NCBIfam" id="TIGR01410">
    <property type="entry name" value="tatB"/>
    <property type="match status" value="1"/>
</dbReference>
<dbReference type="PRINTS" id="PR01506">
    <property type="entry name" value="TATBPROTEIN"/>
</dbReference>
<feature type="chain" id="PRO_1000196661" description="Sec-independent protein translocase protein TatB">
    <location>
        <begin position="1"/>
        <end position="143"/>
    </location>
</feature>
<feature type="transmembrane region" description="Helical" evidence="1">
    <location>
        <begin position="2"/>
        <end position="22"/>
    </location>
</feature>
<feature type="region of interest" description="Disordered" evidence="2">
    <location>
        <begin position="97"/>
        <end position="143"/>
    </location>
</feature>
<comment type="function">
    <text evidence="1">Part of the twin-arginine translocation (Tat) system that transports large folded proteins containing a characteristic twin-arginine motif in their signal peptide across membranes. Together with TatC, TatB is part of a receptor directly interacting with Tat signal peptides. TatB may form an oligomeric binding site that transiently accommodates folded Tat precursor proteins before their translocation.</text>
</comment>
<comment type="subunit">
    <text evidence="1">The Tat system comprises two distinct complexes: a TatABC complex, containing multiple copies of TatA, TatB and TatC subunits, and a separate TatA complex, containing only TatA subunits. Substrates initially bind to the TatABC complex, which probably triggers association of the separate TatA complex to form the active translocon.</text>
</comment>
<comment type="subcellular location">
    <subcellularLocation>
        <location evidence="1">Cell membrane</location>
        <topology evidence="1">Single-pass membrane protein</topology>
    </subcellularLocation>
</comment>
<comment type="similarity">
    <text evidence="1">Belongs to the TatB family.</text>
</comment>
<name>TATB_RHOOB</name>
<organism>
    <name type="scientific">Rhodococcus opacus (strain B4)</name>
    <dbReference type="NCBI Taxonomy" id="632772"/>
    <lineage>
        <taxon>Bacteria</taxon>
        <taxon>Bacillati</taxon>
        <taxon>Actinomycetota</taxon>
        <taxon>Actinomycetes</taxon>
        <taxon>Mycobacteriales</taxon>
        <taxon>Nocardiaceae</taxon>
        <taxon>Rhodococcus</taxon>
    </lineage>
</organism>
<evidence type="ECO:0000255" key="1">
    <source>
        <dbReference type="HAMAP-Rule" id="MF_00237"/>
    </source>
</evidence>
<evidence type="ECO:0000256" key="2">
    <source>
        <dbReference type="SAM" id="MobiDB-lite"/>
    </source>
</evidence>
<gene>
    <name evidence="1" type="primary">tatB</name>
    <name type="ordered locus">ROP_60400</name>
</gene>
<accession>C1AZL6</accession>
<proteinExistence type="inferred from homology"/>
<protein>
    <recommendedName>
        <fullName evidence="1">Sec-independent protein translocase protein TatB</fullName>
    </recommendedName>
</protein>
<reference key="1">
    <citation type="submission" date="2009-03" db="EMBL/GenBank/DDBJ databases">
        <title>Comparison of the complete genome sequences of Rhodococcus erythropolis PR4 and Rhodococcus opacus B4.</title>
        <authorList>
            <person name="Takarada H."/>
            <person name="Sekine M."/>
            <person name="Hosoyama A."/>
            <person name="Yamada R."/>
            <person name="Fujisawa T."/>
            <person name="Omata S."/>
            <person name="Shimizu A."/>
            <person name="Tsukatani N."/>
            <person name="Tanikawa S."/>
            <person name="Fujita N."/>
            <person name="Harayama S."/>
        </authorList>
    </citation>
    <scope>NUCLEOTIDE SEQUENCE [LARGE SCALE GENOMIC DNA]</scope>
    <source>
        <strain>B4</strain>
    </source>
</reference>
<keyword id="KW-1003">Cell membrane</keyword>
<keyword id="KW-0472">Membrane</keyword>
<keyword id="KW-0653">Protein transport</keyword>
<keyword id="KW-0811">Translocation</keyword>
<keyword id="KW-0812">Transmembrane</keyword>
<keyword id="KW-1133">Transmembrane helix</keyword>
<keyword id="KW-0813">Transport</keyword>
<sequence>MFGNIGWGEFMVLLVAALVILGPERLPGAVSWVTKSLRQVREYASGASQQLKDELGPEFEDLRKPLADLNQLRGMTPRAVITKHLLDGDDSILTGNFDKPGSVSFDKSNPGTKAVSADPSTPTAPQNKPLAAGERPPIDLDAT</sequence>